<protein>
    <recommendedName>
        <fullName evidence="1">Urease accessory protein UreG</fullName>
    </recommendedName>
</protein>
<organism>
    <name type="scientific">Klebsiella aerogenes</name>
    <name type="common">Enterobacter aerogenes</name>
    <dbReference type="NCBI Taxonomy" id="548"/>
    <lineage>
        <taxon>Bacteria</taxon>
        <taxon>Pseudomonadati</taxon>
        <taxon>Pseudomonadota</taxon>
        <taxon>Gammaproteobacteria</taxon>
        <taxon>Enterobacterales</taxon>
        <taxon>Enterobacteriaceae</taxon>
        <taxon>Klebsiella/Raoultella group</taxon>
        <taxon>Klebsiella</taxon>
    </lineage>
</organism>
<dbReference type="EMBL" id="M36068">
    <property type="protein sequence ID" value="AAA25154.1"/>
    <property type="molecule type" value="Genomic_DNA"/>
</dbReference>
<dbReference type="SMR" id="P18319"/>
<dbReference type="IntAct" id="P18319">
    <property type="interactions" value="1"/>
</dbReference>
<dbReference type="GO" id="GO:0005737">
    <property type="term" value="C:cytoplasm"/>
    <property type="evidence" value="ECO:0007669"/>
    <property type="project" value="UniProtKB-SubCell"/>
</dbReference>
<dbReference type="GO" id="GO:0005525">
    <property type="term" value="F:GTP binding"/>
    <property type="evidence" value="ECO:0007669"/>
    <property type="project" value="UniProtKB-KW"/>
</dbReference>
<dbReference type="GO" id="GO:0003924">
    <property type="term" value="F:GTPase activity"/>
    <property type="evidence" value="ECO:0007669"/>
    <property type="project" value="InterPro"/>
</dbReference>
<dbReference type="GO" id="GO:0016151">
    <property type="term" value="F:nickel cation binding"/>
    <property type="evidence" value="ECO:0007669"/>
    <property type="project" value="UniProtKB-UniRule"/>
</dbReference>
<dbReference type="GO" id="GO:0043419">
    <property type="term" value="P:urea catabolic process"/>
    <property type="evidence" value="ECO:0007669"/>
    <property type="project" value="InterPro"/>
</dbReference>
<dbReference type="CDD" id="cd05540">
    <property type="entry name" value="UreG"/>
    <property type="match status" value="1"/>
</dbReference>
<dbReference type="FunFam" id="3.40.50.300:FF:000208">
    <property type="entry name" value="Urease accessory protein UreG"/>
    <property type="match status" value="1"/>
</dbReference>
<dbReference type="Gene3D" id="3.40.50.300">
    <property type="entry name" value="P-loop containing nucleotide triphosphate hydrolases"/>
    <property type="match status" value="1"/>
</dbReference>
<dbReference type="HAMAP" id="MF_01389">
    <property type="entry name" value="UreG"/>
    <property type="match status" value="1"/>
</dbReference>
<dbReference type="InterPro" id="IPR003495">
    <property type="entry name" value="CobW/HypB/UreG_nucleotide-bd"/>
</dbReference>
<dbReference type="InterPro" id="IPR027417">
    <property type="entry name" value="P-loop_NTPase"/>
</dbReference>
<dbReference type="InterPro" id="IPR004400">
    <property type="entry name" value="UreG"/>
</dbReference>
<dbReference type="NCBIfam" id="TIGR00101">
    <property type="entry name" value="ureG"/>
    <property type="match status" value="1"/>
</dbReference>
<dbReference type="PANTHER" id="PTHR31715">
    <property type="entry name" value="UREASE ACCESSORY PROTEIN G"/>
    <property type="match status" value="1"/>
</dbReference>
<dbReference type="PANTHER" id="PTHR31715:SF0">
    <property type="entry name" value="UREASE ACCESSORY PROTEIN G"/>
    <property type="match status" value="1"/>
</dbReference>
<dbReference type="Pfam" id="PF02492">
    <property type="entry name" value="cobW"/>
    <property type="match status" value="1"/>
</dbReference>
<dbReference type="PIRSF" id="PIRSF005624">
    <property type="entry name" value="Ni-bind_GTPase"/>
    <property type="match status" value="1"/>
</dbReference>
<dbReference type="SUPFAM" id="SSF52540">
    <property type="entry name" value="P-loop containing nucleoside triphosphate hydrolases"/>
    <property type="match status" value="1"/>
</dbReference>
<name>UREG_KLEAE</name>
<accession>P18319</accession>
<reference key="1">
    <citation type="journal article" date="1990" name="J. Bacteriol.">
        <title>Sequence of the Klebsiella aerogenes urease genes and evidence for accessory proteins facilitating nickel incorporation.</title>
        <authorList>
            <person name="Mulrooney S.B."/>
            <person name="Hausinger R.P."/>
        </authorList>
    </citation>
    <scope>NUCLEOTIDE SEQUENCE [GENOMIC DNA]</scope>
    <source>
        <strain>CG253</strain>
    </source>
</reference>
<reference key="2">
    <citation type="journal article" date="1992" name="J. Bacteriol.">
        <title>Klebsiella aerogenes urease gene cluster: sequence of ureD and demonstration that four accessory genes (ureD, ureE, ureF, and ureG) are involved in nickel metallocenter biosynthesis.</title>
        <authorList>
            <person name="Lee M.H."/>
            <person name="Mulrooney S.B."/>
            <person name="Renner M.J."/>
            <person name="Markowicz Y."/>
            <person name="Hausinger R.P."/>
        </authorList>
    </citation>
    <scope>PROTEIN SEQUENCE OF 1-5</scope>
</reference>
<reference key="3">
    <citation type="journal article" date="1997" name="J. Bacteriol.">
        <title>Characterization of UreG, identification of a UreD-UreF-UreG complex, and evidence suggesting that a nucleotide-binding site in UreG is required for in vivo metallocenter assembly of Klebsiella aerogenes urease.</title>
        <authorList>
            <person name="Moncrief M.B.C."/>
            <person name="Hausinger R.P."/>
        </authorList>
    </citation>
    <scope>SUBCELLULAR LOCATION</scope>
    <scope>MASS SPECTROMETRY</scope>
    <scope>MUTAGENESIS OF LYS-20 AND THR-21</scope>
</reference>
<reference key="4">
    <citation type="journal article" date="1999" name="Proc. Natl. Acad. Sci. U.S.A.">
        <title>GTP-dependent activation of urease apoprotein in complex with the UreD, UreF, and UreG accessory proteins.</title>
        <authorList>
            <person name="Soriano A."/>
            <person name="Hausinger R.P."/>
        </authorList>
    </citation>
    <scope>COMPLEX FORMATION</scope>
    <scope>GTP HYDROLYSIS</scope>
    <scope>INTERACTION WITH UREA; UREB; UREC; URED AND UREF</scope>
</reference>
<feature type="initiator methionine" description="Removed">
    <location>
        <position position="1"/>
    </location>
</feature>
<feature type="chain" id="PRO_0000067666" description="Urease accessory protein UreG">
    <location>
        <begin position="2"/>
        <end position="205"/>
    </location>
</feature>
<feature type="binding site" evidence="3">
    <location>
        <begin position="14"/>
        <end position="21"/>
    </location>
    <ligand>
        <name>GTP</name>
        <dbReference type="ChEBI" id="CHEBI:37565"/>
    </ligand>
</feature>
<feature type="mutagenesis site" description="Does not produce active urease, no UreDFG-apourease complexes are formed." evidence="2">
    <original>K</original>
    <variation>A</variation>
    <location>
        <position position="20"/>
    </location>
</feature>
<feature type="mutagenesis site" description="Does not produce active urease, no UreDFG-apourease complexes are formed." evidence="2">
    <original>T</original>
    <variation>A</variation>
    <location>
        <position position="21"/>
    </location>
</feature>
<keyword id="KW-0143">Chaperone</keyword>
<keyword id="KW-0963">Cytoplasm</keyword>
<keyword id="KW-0903">Direct protein sequencing</keyword>
<keyword id="KW-0342">GTP-binding</keyword>
<keyword id="KW-0996">Nickel insertion</keyword>
<keyword id="KW-0547">Nucleotide-binding</keyword>
<evidence type="ECO:0000255" key="1">
    <source>
        <dbReference type="HAMAP-Rule" id="MF_01389"/>
    </source>
</evidence>
<evidence type="ECO:0000269" key="2">
    <source>
    </source>
</evidence>
<evidence type="ECO:0000305" key="3"/>
<proteinExistence type="evidence at protein level"/>
<sequence length="205" mass="21944">MNSYKHPLRVGVGGPVGSGKTALLEALCKAMRDTWQLAVVTNDIYTKEDQRILTEAGALAPERIVGVETGGCPHTAIREDASMNLAAVEALSEKFGNLDLIFVESGGDNLSATFSPELADLTIYVIDVAEGEKIPRKGGPGITKSDFLVINKTDLAPYVGASLEVMASDTQRMRGDRPWTFTNLKQGDGLSTIIAFLEDKGMLGK</sequence>
<gene>
    <name evidence="1" type="primary">ureG</name>
</gene>
<comment type="function">
    <text>Facilitates the functional incorporation of the urease nickel metallocenter. This process requires GTP hydrolysis, probably effectuated by UreG.</text>
</comment>
<comment type="activity regulation">
    <text>Activation of apourease within the UreDFG-apoprotein complex is inhibited by zinc, copper and cobalt.</text>
</comment>
<comment type="subunit">
    <text evidence="1">Homodimer. UreD, UreF and UreG form a complex that acts as a GTP-hydrolysis-dependent molecular chaperone, activating the urease apoprotein by helping to assemble the nickel containing metallocenter of UreC. The UreE protein probably delivers the nickel.</text>
</comment>
<comment type="interaction">
    <interactant intactId="EBI-6410613">
        <id>P18319</id>
    </interactant>
    <interactant intactId="EBI-6410589">
        <id>Q09063</id>
        <label>ureD</label>
    </interactant>
    <organismsDiffer>false</organismsDiffer>
    <experiments>4</experiments>
</comment>
<comment type="subcellular location">
    <subcellularLocation>
        <location evidence="1 2">Cytoplasm</location>
    </subcellularLocation>
</comment>
<comment type="mass spectrometry" mass="21814.0" error="20.0" method="MALDI" evidence="2"/>
<comment type="similarity">
    <text evidence="1">Belongs to the SIMIBI class G3E GTPase family. UreG subfamily.</text>
</comment>